<evidence type="ECO:0000255" key="1">
    <source>
        <dbReference type="HAMAP-Rule" id="MF_00083"/>
    </source>
</evidence>
<dbReference type="EC" id="3.1.1.29" evidence="1"/>
<dbReference type="EMBL" id="CP001080">
    <property type="protein sequence ID" value="ACD67286.1"/>
    <property type="molecule type" value="Genomic_DNA"/>
</dbReference>
<dbReference type="RefSeq" id="WP_012460342.1">
    <property type="nucleotide sequence ID" value="NC_010730.1"/>
</dbReference>
<dbReference type="SMR" id="B2V6V4"/>
<dbReference type="STRING" id="436114.SYO3AOP1_1688"/>
<dbReference type="KEGG" id="sul:SYO3AOP1_1688"/>
<dbReference type="eggNOG" id="COG0193">
    <property type="taxonomic scope" value="Bacteria"/>
</dbReference>
<dbReference type="HOGENOM" id="CLU_062456_4_1_0"/>
<dbReference type="GO" id="GO:0005737">
    <property type="term" value="C:cytoplasm"/>
    <property type="evidence" value="ECO:0007669"/>
    <property type="project" value="UniProtKB-SubCell"/>
</dbReference>
<dbReference type="GO" id="GO:0004045">
    <property type="term" value="F:peptidyl-tRNA hydrolase activity"/>
    <property type="evidence" value="ECO:0007669"/>
    <property type="project" value="UniProtKB-UniRule"/>
</dbReference>
<dbReference type="GO" id="GO:0000049">
    <property type="term" value="F:tRNA binding"/>
    <property type="evidence" value="ECO:0007669"/>
    <property type="project" value="UniProtKB-UniRule"/>
</dbReference>
<dbReference type="GO" id="GO:0006515">
    <property type="term" value="P:protein quality control for misfolded or incompletely synthesized proteins"/>
    <property type="evidence" value="ECO:0007669"/>
    <property type="project" value="UniProtKB-UniRule"/>
</dbReference>
<dbReference type="GO" id="GO:0072344">
    <property type="term" value="P:rescue of stalled ribosome"/>
    <property type="evidence" value="ECO:0007669"/>
    <property type="project" value="UniProtKB-UniRule"/>
</dbReference>
<dbReference type="CDD" id="cd00462">
    <property type="entry name" value="PTH"/>
    <property type="match status" value="1"/>
</dbReference>
<dbReference type="FunFam" id="3.40.50.1470:FF:000001">
    <property type="entry name" value="Peptidyl-tRNA hydrolase"/>
    <property type="match status" value="1"/>
</dbReference>
<dbReference type="Gene3D" id="3.40.50.1470">
    <property type="entry name" value="Peptidyl-tRNA hydrolase"/>
    <property type="match status" value="1"/>
</dbReference>
<dbReference type="HAMAP" id="MF_00083">
    <property type="entry name" value="Pept_tRNA_hydro_bact"/>
    <property type="match status" value="1"/>
</dbReference>
<dbReference type="InterPro" id="IPR001328">
    <property type="entry name" value="Pept_tRNA_hydro"/>
</dbReference>
<dbReference type="InterPro" id="IPR018171">
    <property type="entry name" value="Pept_tRNA_hydro_CS"/>
</dbReference>
<dbReference type="InterPro" id="IPR036416">
    <property type="entry name" value="Pept_tRNA_hydro_sf"/>
</dbReference>
<dbReference type="NCBIfam" id="TIGR00447">
    <property type="entry name" value="pth"/>
    <property type="match status" value="1"/>
</dbReference>
<dbReference type="PANTHER" id="PTHR17224">
    <property type="entry name" value="PEPTIDYL-TRNA HYDROLASE"/>
    <property type="match status" value="1"/>
</dbReference>
<dbReference type="PANTHER" id="PTHR17224:SF1">
    <property type="entry name" value="PEPTIDYL-TRNA HYDROLASE"/>
    <property type="match status" value="1"/>
</dbReference>
<dbReference type="Pfam" id="PF01195">
    <property type="entry name" value="Pept_tRNA_hydro"/>
    <property type="match status" value="1"/>
</dbReference>
<dbReference type="SUPFAM" id="SSF53178">
    <property type="entry name" value="Peptidyl-tRNA hydrolase-like"/>
    <property type="match status" value="1"/>
</dbReference>
<dbReference type="PROSITE" id="PS01195">
    <property type="entry name" value="PEPT_TRNA_HYDROL_1"/>
    <property type="match status" value="1"/>
</dbReference>
<dbReference type="PROSITE" id="PS01196">
    <property type="entry name" value="PEPT_TRNA_HYDROL_2"/>
    <property type="match status" value="1"/>
</dbReference>
<accession>B2V6V4</accession>
<proteinExistence type="inferred from homology"/>
<reference key="1">
    <citation type="journal article" date="2009" name="J. Bacteriol.">
        <title>Complete and draft genome sequences of six members of the Aquificales.</title>
        <authorList>
            <person name="Reysenbach A.-L."/>
            <person name="Hamamura N."/>
            <person name="Podar M."/>
            <person name="Griffiths E."/>
            <person name="Ferreira S."/>
            <person name="Hochstein R."/>
            <person name="Heidelberg J."/>
            <person name="Johnson J."/>
            <person name="Mead D."/>
            <person name="Pohorille A."/>
            <person name="Sarmiento M."/>
            <person name="Schweighofer K."/>
            <person name="Seshadri R."/>
            <person name="Voytek M.A."/>
        </authorList>
    </citation>
    <scope>NUCLEOTIDE SEQUENCE [LARGE SCALE GENOMIC DNA]</scope>
    <source>
        <strain>YO3AOP1</strain>
    </source>
</reference>
<protein>
    <recommendedName>
        <fullName evidence="1">Peptidyl-tRNA hydrolase</fullName>
        <shortName evidence="1">Pth</shortName>
        <ecNumber evidence="1">3.1.1.29</ecNumber>
    </recommendedName>
</protein>
<feature type="chain" id="PRO_1000202599" description="Peptidyl-tRNA hydrolase">
    <location>
        <begin position="1"/>
        <end position="189"/>
    </location>
</feature>
<feature type="active site" description="Proton acceptor" evidence="1">
    <location>
        <position position="20"/>
    </location>
</feature>
<feature type="binding site" evidence="1">
    <location>
        <position position="15"/>
    </location>
    <ligand>
        <name>tRNA</name>
        <dbReference type="ChEBI" id="CHEBI:17843"/>
    </ligand>
</feature>
<feature type="binding site" evidence="1">
    <location>
        <position position="64"/>
    </location>
    <ligand>
        <name>tRNA</name>
        <dbReference type="ChEBI" id="CHEBI:17843"/>
    </ligand>
</feature>
<feature type="binding site" evidence="1">
    <location>
        <position position="66"/>
    </location>
    <ligand>
        <name>tRNA</name>
        <dbReference type="ChEBI" id="CHEBI:17843"/>
    </ligand>
</feature>
<feature type="binding site" evidence="1">
    <location>
        <position position="112"/>
    </location>
    <ligand>
        <name>tRNA</name>
        <dbReference type="ChEBI" id="CHEBI:17843"/>
    </ligand>
</feature>
<feature type="site" description="Discriminates between blocked and unblocked aminoacyl-tRNA" evidence="1">
    <location>
        <position position="10"/>
    </location>
</feature>
<feature type="site" description="Stabilizes the basic form of H active site to accept a proton" evidence="1">
    <location>
        <position position="91"/>
    </location>
</feature>
<keyword id="KW-0963">Cytoplasm</keyword>
<keyword id="KW-0378">Hydrolase</keyword>
<keyword id="KW-0694">RNA-binding</keyword>
<keyword id="KW-0820">tRNA-binding</keyword>
<organism>
    <name type="scientific">Sulfurihydrogenibium sp. (strain YO3AOP1)</name>
    <dbReference type="NCBI Taxonomy" id="436114"/>
    <lineage>
        <taxon>Bacteria</taxon>
        <taxon>Pseudomonadati</taxon>
        <taxon>Aquificota</taxon>
        <taxon>Aquificia</taxon>
        <taxon>Aquificales</taxon>
        <taxon>Hydrogenothermaceae</taxon>
        <taxon>Sulfurihydrogenibium</taxon>
    </lineage>
</organism>
<comment type="function">
    <text evidence="1">Hydrolyzes ribosome-free peptidyl-tRNAs (with 1 or more amino acids incorporated), which drop off the ribosome during protein synthesis, or as a result of ribosome stalling.</text>
</comment>
<comment type="function">
    <text evidence="1">Catalyzes the release of premature peptidyl moieties from peptidyl-tRNA molecules trapped in stalled 50S ribosomal subunits, and thus maintains levels of free tRNAs and 50S ribosomes.</text>
</comment>
<comment type="catalytic activity">
    <reaction evidence="1">
        <text>an N-acyl-L-alpha-aminoacyl-tRNA + H2O = an N-acyl-L-amino acid + a tRNA + H(+)</text>
        <dbReference type="Rhea" id="RHEA:54448"/>
        <dbReference type="Rhea" id="RHEA-COMP:10123"/>
        <dbReference type="Rhea" id="RHEA-COMP:13883"/>
        <dbReference type="ChEBI" id="CHEBI:15377"/>
        <dbReference type="ChEBI" id="CHEBI:15378"/>
        <dbReference type="ChEBI" id="CHEBI:59874"/>
        <dbReference type="ChEBI" id="CHEBI:78442"/>
        <dbReference type="ChEBI" id="CHEBI:138191"/>
        <dbReference type="EC" id="3.1.1.29"/>
    </reaction>
</comment>
<comment type="subunit">
    <text evidence="1">Monomer.</text>
</comment>
<comment type="subcellular location">
    <subcellularLocation>
        <location evidence="1">Cytoplasm</location>
    </subcellularLocation>
</comment>
<comment type="similarity">
    <text evidence="1">Belongs to the PTH family.</text>
</comment>
<sequence>MIKAIIGLGNPGEKYKNTRHNVGFMVADLVAKSLNCDRKYREKAFSHIFECPDYDVIIAKPQTYMNLSGNAVLNILKDYKIKPSEILVVYDDLDLPLGAVRLRLKGSSGGHNGIKSIINTIKTEEFPRLKIGIGRPEKKEEVSDYVLSPFTKEEKFLLDKVLAHANECILNVLKYGIEKSMNMCNKNLV</sequence>
<name>PTH_SULSY</name>
<gene>
    <name evidence="1" type="primary">pth</name>
    <name type="ordered locus">SYO3AOP1_1688</name>
</gene>